<name>BLO48_KLEPN</name>
<reference evidence="30" key="1">
    <citation type="submission" date="2018-08" db="EMBL/GenBank/DDBJ databases">
        <authorList>
            <consortium name="Pathogen Informatics"/>
        </authorList>
    </citation>
    <scope>NUCLEOTIDE SEQUENCE [LARGE SCALE GENOMIC DNA]</scope>
    <source>
        <strain evidence="30">EuSCAPE_BE110</strain>
    </source>
</reference>
<reference evidence="29" key="2">
    <citation type="submission" date="2019-10" db="EMBL/GenBank/DDBJ databases">
        <title>Molecular typing, antibiotic resistance determination and virulence profiling for 36 multidrug-resistant clinical Klebsiella pneumoniae isolates using second- and third-generation sequencing.</title>
        <authorList>
            <person name="Shelenkov A."/>
            <person name="Mikhaylova Y."/>
            <person name="Yanushevich Y."/>
            <person name="Samoilov A."/>
            <person name="Petrova L."/>
            <person name="Fomina V."/>
            <person name="Gusarov V."/>
            <person name="Zamyatin M."/>
            <person name="Shagin D."/>
        </authorList>
    </citation>
    <scope>NUCLEOTIDE SEQUENCE [LARGE SCALE GENOMIC DNA]</scope>
    <source>
        <strain evidence="29">CriePir140</strain>
    </source>
</reference>
<reference evidence="19" key="3">
    <citation type="journal article" date="1999" name="FEMS Microbiol. Lett.">
        <title>Molecular characterization of In50, a class 1 integron encoding the gene for the extended-spectrum beta-lactamase VEB-1 in Pseudomonas aeruginosa.</title>
        <authorList>
            <person name="Naas T."/>
            <person name="Poirel L."/>
            <person name="Karim A."/>
            <person name="Nordmann P."/>
        </authorList>
    </citation>
    <scope>NUCLEOTIDE SEQUENCE [GENOMIC DNA]</scope>
    <source>
        <strain evidence="19">11978</strain>
    </source>
</reference>
<reference evidence="19" key="4">
    <citation type="journal article" date="2004" name="Antimicrob. Agents Chemother.">
        <title>Emergence of oxacillinase-mediated resistance to imipenem in Klebsiella pneumoniae.</title>
        <authorList>
            <person name="Poirel L."/>
            <person name="Heritier C."/>
            <person name="Tolun V."/>
            <person name="Nordmann P."/>
        </authorList>
    </citation>
    <scope>NUCLEOTIDE SEQUENCE [GENOMIC DNA]</scope>
    <scope>FUNCTION</scope>
    <scope>CATALYTIC ACTIVITY</scope>
    <scope>BIOPHYSICOCHEMICAL PROPERTIES</scope>
    <scope>ACTIVITY REGULATION</scope>
    <scope>INDUCTION</scope>
    <source>
        <strain evidence="19">11978</strain>
    </source>
</reference>
<reference evidence="19" key="5">
    <citation type="journal article" date="2006" name="J. Bacteriol.">
        <title>Functional characterization of IS1999, an IS4 family element involved in mobilization and expression of beta-lactam resistance genes.</title>
        <authorList>
            <person name="Aubert D."/>
            <person name="Naas T."/>
            <person name="Heritier C."/>
            <person name="Poirel L."/>
            <person name="Nordmann P."/>
        </authorList>
    </citation>
    <scope>NUCLEOTIDE SEQUENCE [GENOMIC DNA]</scope>
    <scope>INDUCTION</scope>
    <source>
        <strain evidence="19">11978</strain>
    </source>
</reference>
<reference evidence="20" key="6">
    <citation type="journal article" date="2012" name="Antimicrob. Agents Chemother.">
        <title>Genetic Features of the Widespread Plasmid Coding for the Carbapenemase OXA-48.</title>
        <authorList>
            <person name="Poirel L."/>
            <person name="Bonnin R.A."/>
            <person name="Nordmann P."/>
        </authorList>
    </citation>
    <scope>NUCLEOTIDE SEQUENCE [GENOMIC DNA]</scope>
    <source>
        <strain evidence="20">Kp11978</strain>
        <plasmid evidence="20">pOXA-48</plasmid>
    </source>
</reference>
<reference evidence="22" key="7">
    <citation type="journal article" date="2013" name="Antimicrob. Agents Chemother.">
        <title>Characterization of a New blaOXA-48-Carrying Plasmid in Enterobacteriaceae.</title>
        <authorList>
            <person name="Berger S."/>
            <person name="Alauzet C."/>
            <person name="Aissa N."/>
            <person name="Henard S."/>
            <person name="Rabaud C."/>
            <person name="Bonnet R."/>
            <person name="Lozniewski A."/>
        </authorList>
    </citation>
    <scope>NUCLEOTIDE SEQUENCE [GENOMIC DNA]</scope>
    <source>
        <plasmid evidence="22">pKPoxa-48N1</plasmid>
        <plasmid evidence="23">pKPoxa-48N2</plasmid>
    </source>
</reference>
<reference evidence="21" key="8">
    <citation type="journal article" date="2013" name="PLoS ONE">
        <title>Whole Genome Sequence Analysis of the First Australian OXA-48-Producing Outbreak-Associated Klebsiella pneumoniae Isolates: The Resistome and In Vivo Evolution.</title>
        <authorList>
            <person name="Espedido B.A."/>
            <person name="Steen J.A."/>
            <person name="Ziochos H."/>
            <person name="Grimmond S.M."/>
            <person name="Cooper M.A."/>
            <person name="Gosbell I.B."/>
            <person name="van Hal S.J."/>
            <person name="Jensen S.O."/>
        </authorList>
    </citation>
    <scope>NUCLEOTIDE SEQUENCE [GENOMIC DNA]</scope>
    <source>
        <strain evidence="21">Kp002</strain>
        <plasmid evidence="21">pJEG011</plasmid>
    </source>
</reference>
<reference evidence="24" key="9">
    <citation type="journal article" date="2014" name="Microb. Drug Resist.">
        <title>Molecular Analysis of OXA-48-Carrying Conjugative IncL/M-Like Plasmids in Clinical Isolates of Klebsiella pneumoniae in Ireland.</title>
        <authorList>
            <person name="Power K."/>
            <person name="Wang J."/>
            <person name="Karczmarczyk M."/>
            <person name="Crowley B."/>
            <person name="Cotter M."/>
            <person name="Haughton P."/>
            <person name="Lynch M."/>
            <person name="Schaffer K."/>
            <person name="Fanning S."/>
        </authorList>
    </citation>
    <scope>NUCLEOTIDE SEQUENCE [GENOMIC DNA]</scope>
    <source>
        <strain evidence="24">E71T</strain>
        <plasmid evidence="24">unnamed</plasmid>
    </source>
</reference>
<reference evidence="25" key="10">
    <citation type="journal article" date="2015" name="PLoS ONE">
        <title>Differentiation of IncL and IncM Plasmids Associated with the Spread of Clinically Relevant Antimicrobial Resistance.</title>
        <authorList>
            <person name="Carattoli A."/>
            <person name="Seiffert S.N."/>
            <person name="Schwendener S."/>
            <person name="Perreten V."/>
            <person name="Endimiani A."/>
        </authorList>
    </citation>
    <scope>NUCLEOTIDE SEQUENCE [GENOMIC DNA]</scope>
    <source>
        <strain evidence="25">Kpn-E1.Nr7</strain>
        <plasmid evidence="25">pKpn-E1.Nr7</plasmid>
    </source>
</reference>
<reference evidence="27" key="11">
    <citation type="submission" date="2022-05" db="EMBL/GenBank/DDBJ databases">
        <authorList>
            <person name="Alioto T."/>
            <person name="Alioto T."/>
            <person name="Gomez Garrido J."/>
        </authorList>
    </citation>
    <scope>NUCLEOTIDE SEQUENCE [GENOMIC DNA]</scope>
    <source>
        <strain evidence="27">11</strain>
        <plasmid evidence="27">P1</plasmid>
    </source>
</reference>
<reference evidence="31" key="12">
    <citation type="journal article" date="2009" name="Chem. Biol.">
        <title>Crystal structure of the OXA-48 beta-lactamase reveals mechanistic diversity among class D carbapenemases.</title>
        <authorList>
            <person name="Docquier J.D."/>
            <person name="Calderone V."/>
            <person name="De Luca F."/>
            <person name="Benvenuti M."/>
            <person name="Giuliani F."/>
            <person name="Bellucci L."/>
            <person name="Tafi A."/>
            <person name="Nordmann P."/>
            <person name="Botta M."/>
            <person name="Rossolini G.M."/>
            <person name="Mangani S."/>
        </authorList>
    </citation>
    <scope>X-RAY CRYSTALLOGRAPHY (1.90 ANGSTROMS)</scope>
    <scope>FUNCTION</scope>
    <scope>CATALYTIC ACTIVITY</scope>
    <scope>BIOPHYSICOCHEMICAL PROPERTIES</scope>
    <scope>CARBOXYLATION AT LYS-73</scope>
</reference>
<reference evidence="32" key="13">
    <citation type="journal article" date="2015" name="ACS Chem. Biol.">
        <title>Molecular basis of selective inhibition and slow reversibility of avibactam against class D carbapenemases: a structure-guided study of OXA-24 and OXA-48.</title>
        <authorList>
            <person name="Lahiri S.D."/>
            <person name="Mangani S."/>
            <person name="Jahic H."/>
            <person name="Benvenuti M."/>
            <person name="Durand-Reville T.F."/>
            <person name="De Luca F."/>
            <person name="Ehmann D.E."/>
            <person name="Rossolini G.M."/>
            <person name="Alm R.A."/>
            <person name="Docquier J.D."/>
        </authorList>
    </citation>
    <scope>X-RAY CRYSTALLOGRAPHY (2.30 ANGSTROMS) OF 24-265 IN COMPLEX WITH INHIBITOR</scope>
    <scope>ACTIVITY REGULATION</scope>
    <scope>ACTIVE SITE</scope>
    <scope>CARBOXYLATION AT LYS-73</scope>
</reference>
<reference evidence="33 34" key="14">
    <citation type="journal article" date="2016" name="ACS Chem. Biol.">
        <title>Structural and Kinetic Characterization of Diazabicyclooctanes as Dual Inhibitors of Both Serine-beta-Lactamases and Penicillin-Binding Proteins.</title>
        <authorList>
            <person name="King A.M."/>
            <person name="King D.T."/>
            <person name="French S."/>
            <person name="Brouillette E."/>
            <person name="Asli A."/>
            <person name="Alexander J.A."/>
            <person name="Vuckovic M."/>
            <person name="Maiti S.N."/>
            <person name="Parr T.R."/>
            <person name="Brown E.D."/>
            <person name="Malouin F."/>
            <person name="Strynadka N.C."/>
            <person name="Wright G.D."/>
        </authorList>
    </citation>
    <scope>X-RAY CRYSTALLOGRAPHY (1.74 ANGSTROMS) OF 24-265 IN COMPLEXES WITH INHIBITORS</scope>
    <scope>ACTIVITY REGULATION</scope>
    <scope>ACTIVE SITE</scope>
</reference>
<reference evidence="35 36" key="15">
    <citation type="journal article" date="2016" name="Biochemistry">
        <title>Removal of the Side Chain at the Active-Site Serine by a Glycine Substitution Increases the Stability of a Wide Range of Serine beta-Lactamases by Relieving Steric Strain.</title>
        <authorList>
            <person name="Stojanoski V."/>
            <person name="Adamski C.J."/>
            <person name="Hu L."/>
            <person name="Mehta S.C."/>
            <person name="Sankaran B."/>
            <person name="Zwart P."/>
            <person name="Prasad B.V."/>
            <person name="Palzkill T."/>
        </authorList>
    </citation>
    <scope>X-RAY CRYSTALLOGRAPHY (1.89 ANGSTROMS) OF 25-265 OF MUTANTS ALA-70 AND GLY-70</scope>
    <scope>FUNCTION</scope>
    <scope>CATALYTIC ACTIVITY</scope>
    <scope>BIOPHYSICOCHEMICAL PROPERTIES</scope>
    <scope>MUTAGENESIS OF SER-70</scope>
</reference>
<reference evidence="37 38" key="16">
    <citation type="journal article" date="2018" name="FEBS J.">
        <title>The biological assembly of OXA-48 reveals a dimer interface with high charge complementarity and very high affinity.</title>
        <authorList>
            <person name="Lund B.A."/>
            <person name="Thomassen A.M."/>
            <person name="Nesheim B.H.B."/>
            <person name="Carlsen T.J.O."/>
            <person name="Isaksson J."/>
            <person name="Christopeit T."/>
            <person name="Leiros H.S."/>
        </authorList>
    </citation>
    <scope>X-RAY CRYSTALLOGRAPHY (2.55 ANGSTROMS) OF 23-265 OF MUTANTS ALA-189 AND ALA-206</scope>
    <scope>SUBUNIT</scope>
    <scope>MUTAGENESIS OF ARG-189 AND ARG-206</scope>
</reference>
<reference evidence="44" key="17">
    <citation type="journal article" date="2019" name="Antibiotics">
        <title>Structural Analysis of The OXA-48 Carbapenemase Bound to A 'Poor' Carbapenem Substrate, Doripenem.</title>
        <authorList>
            <person name="Papp-Wallace K.M."/>
            <person name="Kumar V."/>
            <person name="Zeiser E.T."/>
            <person name="Becka S.A."/>
            <person name="van den Akker F."/>
        </authorList>
    </citation>
    <scope>X-RAY CRYSTALLOGRAPHY (1.50 ANGSTROMS) OF MUTANT ALA-73 IN COMPLEX WITH DORIPENEM</scope>
</reference>
<reference evidence="39 40 41 42 43" key="18">
    <citation type="journal article" date="2019" name="Antimicrob. Agents Chemother.">
        <title>Structural Insights into the Mechanism of Carbapenemase Activity of the OXA-48 beta-Lactamase.</title>
        <authorList>
            <person name="Smith C.A."/>
            <person name="Stewart N.K."/>
            <person name="Toth M."/>
            <person name="Vakulenko S.B."/>
        </authorList>
    </citation>
    <scope>X-RAY CRYSTALLOGRAPHY (1.60 ANGSTROMS) IN COMPLEXES WITH CARBAPENEM SUBSTRATES</scope>
    <scope>SUBUNIT</scope>
    <scope>ACTIVE SITE</scope>
</reference>
<reference evidence="45" key="19">
    <citation type="journal article" date="2020" name="J. Med. Chem.">
        <title>Discovery of Cyclic Boronic Acid QPX7728, an Ultrabroad-Spectrum Inhibitor of Serine and Metallo-beta-lactamases.</title>
        <authorList>
            <person name="Hecker S.J."/>
            <person name="Reddy K.R."/>
            <person name="Lomovskaya O."/>
            <person name="Griffith D.C."/>
            <person name="Rubio-Aparicio D."/>
            <person name="Nelson K."/>
            <person name="Tsivkovski R."/>
            <person name="Sun D."/>
            <person name="Sabet M."/>
            <person name="Tarazi Z."/>
            <person name="Parkinson J."/>
            <person name="Totrov M."/>
            <person name="Boyer S.H."/>
            <person name="Glinka T.W."/>
            <person name="Pemberton O.A."/>
            <person name="Chen Y."/>
            <person name="Dudley M.N."/>
        </authorList>
    </citation>
    <scope>X-RAY CRYSTALLOGRAPHY (1.80 ANGSTROMS) OF 25-265 IN COMPLEX WITH INHIBITOR</scope>
    <scope>ACTIVITY REGULATION</scope>
    <scope>ACTIVE SITE</scope>
</reference>
<reference evidence="46 47" key="20">
    <citation type="journal article" date="2023" name="ACS Cent. Sci.">
        <title>An Ion-Pair Induced Intermediate Complex Captured in Class D Carbapenemase Reveals Chloride Ion as a Janus Effector Modulating Activity.</title>
        <authorList>
            <person name="Zhou Q."/>
            <person name="Catalan P."/>
            <person name="Bell H."/>
            <person name="Baumann P."/>
            <person name="Cooke R."/>
            <person name="Evans R."/>
            <person name="Yang J."/>
            <person name="Zhang Z."/>
            <person name="Zappala D."/>
            <person name="Zhang Y."/>
            <person name="Blackburn G.M."/>
            <person name="He Y."/>
            <person name="Jin Y."/>
        </authorList>
    </citation>
    <scope>X-RAY CRYSTALLOGRAPHY (1.53 ANGSTROMS) OF 23-265 IN APO FORM AND IN COMPLEXES WITH IMIPENEM INHIBITOR AND CHLORIDE; BROMIDE; IODIDE; BICARBONATE AND OF MUTANTS ALA-185/ALA-186/ALA-206 AND ALA-250 IN COMPLEXES WITH CHLORIDE AND BROMIDE</scope>
    <scope>FUNCTION</scope>
    <scope>CATALYTIC ACTIVITY</scope>
    <scope>ACTIVITY REGULATION</scope>
</reference>
<feature type="signal peptide" evidence="4">
    <location>
        <begin position="1"/>
        <end position="22"/>
    </location>
</feature>
<feature type="chain" id="PRO_5015098593" description="Beta-lactamase OXA-48" evidence="4">
    <location>
        <begin position="23"/>
        <end position="265"/>
    </location>
</feature>
<feature type="active site" description="Acyl-ester intermediate" evidence="5 10 11 14 15 32 33 34 40 41 42 43 45">
    <location>
        <position position="70"/>
    </location>
</feature>
<feature type="binding site" evidence="2">
    <location>
        <position position="70"/>
    </location>
    <ligand>
        <name>a beta-lactam</name>
        <dbReference type="ChEBI" id="CHEBI:35627"/>
    </ligand>
</feature>
<feature type="binding site" evidence="1">
    <location>
        <position position="73"/>
    </location>
    <ligand>
        <name>a beta-lactam</name>
        <dbReference type="ChEBI" id="CHEBI:35627"/>
    </ligand>
</feature>
<feature type="binding site" evidence="2">
    <location>
        <position position="118"/>
    </location>
    <ligand>
        <name>a beta-lactam</name>
        <dbReference type="ChEBI" id="CHEBI:35627"/>
    </ligand>
</feature>
<feature type="binding site" evidence="2">
    <location>
        <position position="250"/>
    </location>
    <ligand>
        <name>a beta-lactam</name>
        <dbReference type="ChEBI" id="CHEBI:35627"/>
    </ligand>
</feature>
<feature type="modified residue" description="N6-carboxylysine" evidence="5 9 10 31 32">
    <location>
        <position position="73"/>
    </location>
</feature>
<feature type="mutagenesis site" description="Does not alter thermal stability." evidence="12">
    <original>S</original>
    <variation>A</variation>
    <location>
        <position position="70"/>
    </location>
</feature>
<feature type="mutagenesis site" description="Increases thermal stability. Abolishes hydrolysis of cephalothin and decreases catalytic efficiency about 60-fold with respect to ampicillin." evidence="12">
    <original>S</original>
    <variation>G</variation>
    <location>
        <position position="70"/>
    </location>
</feature>
<feature type="mutagenesis site" description="No significant effect on catalytic efficiency with respect to ampicillin. Very little reduction in dimerization at neutral pH. Predominantly monomer at neutral pH; when associated with A-206. Slightly decreases thermal stability. Significantly decreases thermal stability; when associated with A-206." evidence="13">
    <original>R</original>
    <variation>A</variation>
    <location>
        <position position="189"/>
    </location>
</feature>
<feature type="mutagenesis site" description="No significant effect on catalytic efficiency with respect to ampicillin, nitrocefin or imipenem. Very little reduction in dimerization at neutral pH. Predominantly monomer at neutral pH; when associated with A-189. Slightly decreases thermal stability. Significantly decreases thermal stability; when associated with A-189." evidence="13">
    <original>R</original>
    <variation>A</variation>
    <location>
        <position position="206"/>
    </location>
</feature>
<feature type="strand" evidence="49">
    <location>
        <begin position="25"/>
        <end position="27"/>
    </location>
</feature>
<feature type="helix" evidence="52">
    <location>
        <begin position="29"/>
        <end position="31"/>
    </location>
</feature>
<feature type="helix" evidence="52">
    <location>
        <begin position="32"/>
        <end position="36"/>
    </location>
</feature>
<feature type="turn" evidence="52">
    <location>
        <begin position="37"/>
        <end position="39"/>
    </location>
</feature>
<feature type="strand" evidence="52">
    <location>
        <begin position="42"/>
        <end position="48"/>
    </location>
</feature>
<feature type="turn" evidence="52">
    <location>
        <begin position="49"/>
        <end position="52"/>
    </location>
</feature>
<feature type="strand" evidence="52">
    <location>
        <begin position="53"/>
        <end position="57"/>
    </location>
</feature>
<feature type="helix" evidence="52">
    <location>
        <begin position="59"/>
        <end position="62"/>
    </location>
</feature>
<feature type="strand" evidence="50">
    <location>
        <begin position="64"/>
        <end position="66"/>
    </location>
</feature>
<feature type="helix" evidence="52">
    <location>
        <begin position="69"/>
        <end position="72"/>
    </location>
</feature>
<feature type="helix" evidence="52">
    <location>
        <begin position="73"/>
        <end position="82"/>
    </location>
</feature>
<feature type="strand" evidence="51">
    <location>
        <begin position="84"/>
        <end position="86"/>
    </location>
</feature>
<feature type="helix" evidence="52">
    <location>
        <begin position="103"/>
        <end position="105"/>
    </location>
</feature>
<feature type="helix" evidence="52">
    <location>
        <begin position="111"/>
        <end position="116"/>
    </location>
</feature>
<feature type="helix" evidence="52">
    <location>
        <begin position="120"/>
        <end position="130"/>
    </location>
</feature>
<feature type="helix" evidence="52">
    <location>
        <begin position="132"/>
        <end position="141"/>
    </location>
</feature>
<feature type="strand" evidence="52">
    <location>
        <begin position="145"/>
        <end position="147"/>
    </location>
</feature>
<feature type="turn" evidence="48">
    <location>
        <begin position="153"/>
        <end position="155"/>
    </location>
</feature>
<feature type="helix" evidence="52">
    <location>
        <begin position="156"/>
        <end position="159"/>
    </location>
</feature>
<feature type="strand" evidence="52">
    <location>
        <begin position="162"/>
        <end position="164"/>
    </location>
</feature>
<feature type="helix" evidence="52">
    <location>
        <begin position="166"/>
        <end position="177"/>
    </location>
</feature>
<feature type="strand" evidence="52">
    <location>
        <begin position="181"/>
        <end position="183"/>
    </location>
</feature>
<feature type="helix" evidence="52">
    <location>
        <begin position="185"/>
        <end position="194"/>
    </location>
</feature>
<feature type="strand" evidence="52">
    <location>
        <begin position="196"/>
        <end position="199"/>
    </location>
</feature>
<feature type="strand" evidence="52">
    <location>
        <begin position="204"/>
        <end position="212"/>
    </location>
</feature>
<feature type="strand" evidence="52">
    <location>
        <begin position="214"/>
        <end position="217"/>
    </location>
</feature>
<feature type="strand" evidence="52">
    <location>
        <begin position="219"/>
        <end position="227"/>
    </location>
</feature>
<feature type="strand" evidence="52">
    <location>
        <begin position="232"/>
        <end position="240"/>
    </location>
</feature>
<feature type="helix" evidence="49">
    <location>
        <begin position="244"/>
        <end position="248"/>
    </location>
</feature>
<feature type="helix" evidence="52">
    <location>
        <begin position="249"/>
        <end position="260"/>
    </location>
</feature>
<gene>
    <name evidence="17" type="primary">OXA-48</name>
    <name evidence="19" type="synonym">bla OXA-48</name>
    <name evidence="30" type="synonym">bla_4</name>
    <name evidence="17 20" type="synonym">blaOXA-48</name>
    <name evidence="24" type="ORF">KPE71T_00045</name>
    <name evidence="30" type="ORF">SAMEA3727706_05517</name>
</gene>
<keyword id="KW-0002">3D-structure</keyword>
<keyword id="KW-0046">Antibiotic resistance</keyword>
<keyword id="KW-0378">Hydrolase</keyword>
<keyword id="KW-0614">Plasmid</keyword>
<keyword id="KW-0732">Signal</keyword>
<protein>
    <recommendedName>
        <fullName evidence="6 17">Beta-lactamase OXA-48</fullName>
        <ecNumber evidence="6 7 9 12 16">3.5.2.6</ecNumber>
    </recommendedName>
</protein>
<evidence type="ECO:0000250" key="1">
    <source>
        <dbReference type="UniProtKB" id="P13661"/>
    </source>
</evidence>
<evidence type="ECO:0000250" key="2">
    <source>
        <dbReference type="UniProtKB" id="Q8RLA6"/>
    </source>
</evidence>
<evidence type="ECO:0000250" key="3">
    <source>
        <dbReference type="UniProtKB" id="Q9L4P2"/>
    </source>
</evidence>
<evidence type="ECO:0000255" key="4"/>
<evidence type="ECO:0000255" key="5">
    <source>
        <dbReference type="PIRSR" id="PIRSR602137-50"/>
    </source>
</evidence>
<evidence type="ECO:0000255" key="6">
    <source>
        <dbReference type="RuleBase" id="RU361140"/>
    </source>
</evidence>
<evidence type="ECO:0000269" key="7">
    <source>
    </source>
</evidence>
<evidence type="ECO:0000269" key="8">
    <source>
    </source>
</evidence>
<evidence type="ECO:0000269" key="9">
    <source>
    </source>
</evidence>
<evidence type="ECO:0000269" key="10">
    <source>
    </source>
</evidence>
<evidence type="ECO:0000269" key="11">
    <source>
    </source>
</evidence>
<evidence type="ECO:0000269" key="12">
    <source>
    </source>
</evidence>
<evidence type="ECO:0000269" key="13">
    <source>
    </source>
</evidence>
<evidence type="ECO:0000269" key="14">
    <source>
    </source>
</evidence>
<evidence type="ECO:0000269" key="15">
    <source>
    </source>
</evidence>
<evidence type="ECO:0000269" key="16">
    <source>
    </source>
</evidence>
<evidence type="ECO:0000303" key="17">
    <source>
    </source>
</evidence>
<evidence type="ECO:0000305" key="18"/>
<evidence type="ECO:0000312" key="19">
    <source>
        <dbReference type="EMBL" id="AAP70012.1"/>
    </source>
</evidence>
<evidence type="ECO:0000312" key="20">
    <source>
        <dbReference type="EMBL" id="AEV46197.1"/>
    </source>
</evidence>
<evidence type="ECO:0000312" key="21">
    <source>
        <dbReference type="EMBL" id="AGJ73905.1"/>
    </source>
</evidence>
<evidence type="ECO:0000312" key="22">
    <source>
        <dbReference type="EMBL" id="AGL12970.1"/>
    </source>
</evidence>
<evidence type="ECO:0000312" key="23">
    <source>
        <dbReference type="EMBL" id="AGL13044.1"/>
    </source>
</evidence>
<evidence type="ECO:0000312" key="24">
    <source>
        <dbReference type="EMBL" id="AGW25497.1"/>
    </source>
</evidence>
<evidence type="ECO:0000312" key="25">
    <source>
        <dbReference type="EMBL" id="AKA86737.1"/>
    </source>
</evidence>
<evidence type="ECO:0000312" key="26">
    <source>
        <dbReference type="EMBL" id="AKJ18670.1"/>
    </source>
</evidence>
<evidence type="ECO:0000312" key="27">
    <source>
        <dbReference type="EMBL" id="CAH5611484.1"/>
    </source>
</evidence>
<evidence type="ECO:0000312" key="28">
    <source>
        <dbReference type="EMBL" id="CRN12897.1"/>
    </source>
</evidence>
<evidence type="ECO:0000312" key="29">
    <source>
        <dbReference type="EMBL" id="MRK29563.1"/>
    </source>
</evidence>
<evidence type="ECO:0000312" key="30">
    <source>
        <dbReference type="EMBL" id="SWV87943.1"/>
    </source>
</evidence>
<evidence type="ECO:0007744" key="31">
    <source>
        <dbReference type="PDB" id="3HBR"/>
    </source>
</evidence>
<evidence type="ECO:0007744" key="32">
    <source>
        <dbReference type="PDB" id="4WMC"/>
    </source>
</evidence>
<evidence type="ECO:0007744" key="33">
    <source>
        <dbReference type="PDB" id="5FAQ"/>
    </source>
</evidence>
<evidence type="ECO:0007744" key="34">
    <source>
        <dbReference type="PDB" id="5FAS"/>
    </source>
</evidence>
<evidence type="ECO:0007744" key="35">
    <source>
        <dbReference type="PDB" id="5HAP"/>
    </source>
</evidence>
<evidence type="ECO:0007744" key="36">
    <source>
        <dbReference type="PDB" id="5HAQ"/>
    </source>
</evidence>
<evidence type="ECO:0007744" key="37">
    <source>
        <dbReference type="PDB" id="5OFT"/>
    </source>
</evidence>
<evidence type="ECO:0007744" key="38">
    <source>
        <dbReference type="PDB" id="6GOA"/>
    </source>
</evidence>
<evidence type="ECO:0007744" key="39">
    <source>
        <dbReference type="PDB" id="6P96"/>
    </source>
</evidence>
<evidence type="ECO:0007744" key="40">
    <source>
        <dbReference type="PDB" id="6P97"/>
    </source>
</evidence>
<evidence type="ECO:0007744" key="41">
    <source>
        <dbReference type="PDB" id="6P98"/>
    </source>
</evidence>
<evidence type="ECO:0007744" key="42">
    <source>
        <dbReference type="PDB" id="6P99"/>
    </source>
</evidence>
<evidence type="ECO:0007744" key="43">
    <source>
        <dbReference type="PDB" id="6P9C"/>
    </source>
</evidence>
<evidence type="ECO:0007744" key="44">
    <source>
        <dbReference type="PDB" id="6PXX"/>
    </source>
</evidence>
<evidence type="ECO:0007744" key="45">
    <source>
        <dbReference type="PDB" id="6V1O"/>
    </source>
</evidence>
<evidence type="ECO:0007744" key="46">
    <source>
        <dbReference type="PDB" id="7O5N"/>
    </source>
</evidence>
<evidence type="ECO:0007744" key="47">
    <source>
        <dbReference type="PDB" id="7O9N"/>
    </source>
</evidence>
<evidence type="ECO:0007829" key="48">
    <source>
        <dbReference type="PDB" id="6P96"/>
    </source>
</evidence>
<evidence type="ECO:0007829" key="49">
    <source>
        <dbReference type="PDB" id="6PXX"/>
    </source>
</evidence>
<evidence type="ECO:0007829" key="50">
    <source>
        <dbReference type="PDB" id="6ZRP"/>
    </source>
</evidence>
<evidence type="ECO:0007829" key="51">
    <source>
        <dbReference type="PDB" id="7AUX"/>
    </source>
</evidence>
<evidence type="ECO:0007829" key="52">
    <source>
        <dbReference type="PDB" id="8PEB"/>
    </source>
</evidence>
<accession>Q6XEC0</accession>
<sequence length="265" mass="30359">MRVLALSAVFLVASIIGMPAVAKEWQENKSWNAHFTEHKSQGVVVLWNENKQQGFTNNLKRANQAFLPASTFKIPNSLIALDLGVVKDEHQVFKWDGQTRDIATWNRDHNLITAMKYSVVPVYQEFARQIGEARMSKMLHAFDYGNEDISGNVDSFWLDGGIRISATEQISFLRKLYHNKLHVSERSQRIVKQAMLTEANGDYIIRAKTGYSTRIEPKIGWWVGWVELDDNVWFFAMNMDMPTSDGLGLRQAITKEVLKQEKIIP</sequence>
<comment type="function">
    <text evidence="7 9 12 16">Class D beta-lactamase which confers resistance to the beta-lactam antibiotics, including amoxicillin, and moderate resistance to cephalosporins and carbapenems such as cephalothin and imipenem; in the DH10B strain of E.coli (PubMed:14693513). Acts via hydrolysis of the beta-lactam ring (PubMed:14693513, PubMed:19477418, PubMed:27073009, PubMed:38161376). Has oxacillin-, cephalothin- and imipenem-hydrolyzing activities (PubMed:14693513, PubMed:19477418, PubMed:27073009, PubMed:38161376).</text>
</comment>
<comment type="catalytic activity">
    <reaction evidence="7 9 12 16">
        <text>a beta-lactam + H2O = a substituted beta-amino acid</text>
        <dbReference type="Rhea" id="RHEA:20401"/>
        <dbReference type="ChEBI" id="CHEBI:15377"/>
        <dbReference type="ChEBI" id="CHEBI:35627"/>
        <dbReference type="ChEBI" id="CHEBI:140347"/>
        <dbReference type="EC" id="3.5.2.6"/>
    </reaction>
</comment>
<comment type="activity regulation">
    <text evidence="7 10 11 15 16">Inhibited by avibactam, related diazabicyclooctane (DBO) derivatives and by bicyclic boronic acids, via a covalent binding to Ser-70 (PubMed:25406838, PubMed:26731698, PubMed:32150407). Inhibited by chloride, bromide and iodide ions (PubMed:38161376). Not inhibited by the beta-lactamase-blocking agents, clavulanic acid or tazobactam (PubMed:14693513).</text>
</comment>
<comment type="biophysicochemical properties">
    <kinetics>
        <KM evidence="7">40 uM for benzylpenicillin (at pH 7.0 and 30 degrees Celsius)</KM>
        <KM evidence="7">5200 uM for ampicillin (at pH 7.0 and 30 degrees Celsius)</KM>
        <KM evidence="12">1630 uM for ampicillin (at pH 7.2 and 30 degrees Celsius)</KM>
        <KM evidence="9">395 uM for ampicillin (at pH 7.0)</KM>
        <KM evidence="9">45 uM for temocillin (at pH 7.0)</KM>
        <KM evidence="7">55 uM for ticarcillin (at pH 7.0 and 30 degrees Celsius)</KM>
        <KM evidence="7">410 uM for piperacillin (at pH 7.0 and 30 degrees Celsius)</KM>
        <KM evidence="9">120 uM for nitrocefin (at pH 7.0)</KM>
        <KM evidence="7">20 uM for cephalothin (at pH 7.0 and 30 degrees Celsius)</KM>
        <KM evidence="12">140 uM for cephalothin (at pH 7.2 and 30 degrees Celsius)</KM>
        <KM evidence="9">195 uM for cephalothin (at pH 7.0)</KM>
        <KM evidence="9">200 uM for cefoxitin (at pH 7.0)</KM>
        <KM evidence="7">27 uM for cephaloridine (at pH 7.0 and 30 degrees Celsius)</KM>
        <KM evidence="7">190 uM for cefotaxime (at pH 7.0 and 30 degrees Celsius)</KM>
        <KM evidence="9">900 uM for cefotaxime (at pH 7.0)</KM>
        <KM evidence="7">5100 uM for ceftazidime (at pH 7.0 and 30 degrees Celsius)</KM>
        <KM evidence="7">160 uM for cefepime (at pH 7.0 and 30 degrees Celsius)</KM>
        <KM evidence="9">550 uM for cefepime (at pH 7.0)</KM>
        <KM evidence="7">390 uM for cefpirome (at pH 7.0 and 30 degrees Celsius)</KM>
        <KM evidence="7">30 uM for oxacillin (at pH 7.0 and 30 degrees Celsius)</KM>
        <KM evidence="9">95 uM for oxacillin (at pH 7.0)</KM>
        <KM evidence="7">14 uM for imipenem (at pH 7.0 and 30 degrees Celsius)</KM>
        <KM evidence="9">13 uM for imipenem (at pH 7.0)</KM>
        <KM evidence="7">200 uM for meropenem (at pH 7.0 and 30 degrees Celsius)</KM>
        <KM evidence="9">11 uM for meropenem (at pH 7.0)</KM>
        <KM evidence="9">100 uM for ertapenem (at pH 7.0)</KM>
        <KM evidence="9">14 uM for panipenem (at pH 7.0)</KM>
        <KM evidence="9">13 uM for faropenem (at pH 7.0)</KM>
        <text evidence="7 9 12">kcat is 245 sec(-1) with benzylpenicillin as substrate (at pH 7.0 and 30 degrees Celsius) (PubMed:14693513). kcat is 340 sec(-1) with ampicillin as substrate (at pH 7.0 and 30 degrees Celsius) (PubMed:14693513). kcat is 208 sec(-1) with ampicillin as substrate (at pH 7.2 and 30 degrees Celsius) (PubMed:27073009). kcat is 955 sec(-1) with ampicillin as substrate (at pH 7.0) (PubMed:19477418). kcat is 0.3 sec(-1) with temocillin as substrate (at pH 7.0) (PubMed:19477418). kcat is 45 sec(-1) with ticarcillin as substrate (at pH 7.0 and 30 degrees Celsius) (PubMed:14693513). kcat is 75 sec(-1) with piperacillin as substrate (at pH 7.0 and 30 degrees Celsius) (PubMed:14693513). kcat is 940 sec(-1) with nitrocefin as substrate (at pH 7.0) (PubMed:19477418). kcat is 3 sec(-1) with cephalothin as substrate (at pH 7.0 and 30 degrees Celsius) (PubMed:14693513). kcat is 2.8 sec(-1) with cephalothin as substrate (at pH 7.2 and 30 degrees Celsius) (PubMed:27073009). kcat is 0.05 sec(-1) with cefoxitin as substrate (at pH 7.0) (PubMed:19477418). kcat is 44 sec(-1) with cephalothin as substrate (at pH 7.0) (PubMed:19477418). kcat is 2 sec(-1) with cephaloridine as substrate (at pH 7.0 and 30 degrees Celsius) (PubMed:14693513). kcat is 10 sec(-1) with cefotaxime as substrate (at pH 7.0 and 30 degrees Celsius) (PubMed:14693513). kcat is 9 sec(-1) with cefotaxime as substrate (at pH 7.0) (PubMed:19477418). kcat is 4 sec(-1) with ceftazidime as substrate (at pH 7.0 and 30 degrees Celsius) (PubMed:14693513). kcat is 1 sec(-1) with cefepime as substrate (at pH 7.0 and 30 degrees Celsius) (PubMed:14693513). kcat is 0.6 sec(-1) with cefepime as substrate (at pH 7.0) (PubMed:19477418). kcat is 8 sec(-1) with cefpirome as substrate (at pH 7.0 and 30 degrees Celsius) (PubMed:14693513). kcat is 25 sec(-1) with oxacillin as substrate (at pH 7.0 and 30 degrees Celsius) (PubMed:14693513). kcat is 130 sec(-1) with oxacillin as substrate (at pH 7.0) (PubMed:19477418). kcat is 2 sec(-1) with imipenem as substrate (at pH 7.0 and 30 degrees Celsius) (PubMed:14693513). kcat is 4.8 sec(-1) with imipenem as substrate (at pH 7.0) (PubMed:19477418). kcat is 0.1 sec(-1) with meropenem as substrate (at pH 7.0 and 30 degrees Celsius) (PubMed:14693513). kcat is 0.07 sec(-1) with meropenem as substrate (at pH 7.0) (PubMed:19477418). kcat is 0.13 sec(-1) with ertapenem as substrate (at pH 7.0) (PubMed:19477418). kcat is 1.4 sec(-1) with panipenem as substrate (at pH 7.0) (PubMed:19477418). kcat is 0.04 sec(-1) with faropenem as substrate (at pH 7.0) (PubMed:19477418).</text>
    </kinetics>
</comment>
<comment type="subunit">
    <text evidence="1 13 14">Monomer (By similarity). Dimer (PubMed:30153368, PubMed:31358584).</text>
</comment>
<comment type="induction">
    <text evidence="7 8">Expressed from an upstream promoter, P(out), in an insertion sequence IS1999.</text>
</comment>
<comment type="PTM">
    <text evidence="2 3">Carboxylated on the epsilon-amino group of a lysine, with the resulting carbamate functional group serving as a general base (By similarity). Probably N-carboxylated at Lys-73 at neutral pH in vivo and undergoes complete N-decarboxylation, at pH 4.1, in vitro (By similarity).</text>
</comment>
<comment type="miscellaneous">
    <text evidence="16">When OXA-48 is present in clinical isolates of K.pneumoniae, increasing chloride concentration during antibiotic treatment reduces bacterial growth.</text>
</comment>
<comment type="similarity">
    <text evidence="18">Belongs to the class-D beta-lactamase family.</text>
</comment>
<proteinExistence type="evidence at protein level"/>
<organism evidence="19">
    <name type="scientific">Klebsiella pneumoniae</name>
    <dbReference type="NCBI Taxonomy" id="573"/>
    <lineage>
        <taxon>Bacteria</taxon>
        <taxon>Pseudomonadati</taxon>
        <taxon>Pseudomonadota</taxon>
        <taxon>Gammaproteobacteria</taxon>
        <taxon>Enterobacterales</taxon>
        <taxon>Enterobacteriaceae</taxon>
        <taxon>Klebsiella/Raoultella group</taxon>
        <taxon>Klebsiella</taxon>
        <taxon>Klebsiella pneumoniae complex</taxon>
    </lineage>
</organism>
<geneLocation type="plasmid" evidence="21">
    <name>pJEG011</name>
</geneLocation>
<geneLocation type="plasmid" evidence="28">
    <name>pKP112</name>
</geneLocation>
<geneLocation type="plasmid" evidence="22">
    <name>pKPoxa-48N1</name>
</geneLocation>
<geneLocation type="plasmid" evidence="23">
    <name>pKPoxa-48N2</name>
</geneLocation>
<geneLocation type="plasmid" evidence="25">
    <name>pKpn-E1.Nr7</name>
</geneLocation>
<geneLocation type="plasmid" evidence="20">
    <name>pOXA-48</name>
</geneLocation>
<geneLocation type="plasmid" evidence="26">
    <name>pOXA-48E1</name>
</geneLocation>
<geneLocation type="plasmid" evidence="24">
    <name>unnamed</name>
</geneLocation>
<geneLocation type="plasmid" evidence="27">
    <name>P1</name>
</geneLocation>
<dbReference type="EC" id="3.5.2.6" evidence="6 7 9 12 16"/>
<dbReference type="EMBL" id="AY236073">
    <property type="protein sequence ID" value="AAP70012.1"/>
    <property type="molecule type" value="Genomic_DNA"/>
</dbReference>
<dbReference type="EMBL" id="JN626286">
    <property type="protein sequence ID" value="AEV46197.1"/>
    <property type="molecule type" value="Genomic_DNA"/>
</dbReference>
<dbReference type="EMBL" id="KC354801">
    <property type="protein sequence ID" value="AGJ73905.1"/>
    <property type="molecule type" value="Genomic_DNA"/>
</dbReference>
<dbReference type="EMBL" id="KC757416">
    <property type="protein sequence ID" value="AGL12970.1"/>
    <property type="molecule type" value="Genomic_DNA"/>
</dbReference>
<dbReference type="EMBL" id="KC757417">
    <property type="protein sequence ID" value="AGL13044.1"/>
    <property type="molecule type" value="Genomic_DNA"/>
</dbReference>
<dbReference type="EMBL" id="KC335143">
    <property type="protein sequence ID" value="AGW25497.1"/>
    <property type="molecule type" value="Genomic_DNA"/>
</dbReference>
<dbReference type="EMBL" id="KM406491">
    <property type="protein sequence ID" value="AKA86737.1"/>
    <property type="molecule type" value="Genomic_DNA"/>
</dbReference>
<dbReference type="EMBL" id="KP659188">
    <property type="protein sequence ID" value="AKJ18670.1"/>
    <property type="molecule type" value="Genomic_DNA"/>
</dbReference>
<dbReference type="EMBL" id="KT265173">
    <property type="protein sequence ID" value="ALA50742.1"/>
    <property type="molecule type" value="Genomic_DNA"/>
</dbReference>
<dbReference type="EMBL" id="KT265174">
    <property type="protein sequence ID" value="ALA50745.1"/>
    <property type="molecule type" value="Genomic_DNA"/>
</dbReference>
<dbReference type="EMBL" id="KT265175">
    <property type="protein sequence ID" value="ALA50748.1"/>
    <property type="molecule type" value="Genomic_DNA"/>
</dbReference>
<dbReference type="EMBL" id="KT265176">
    <property type="protein sequence ID" value="ALA50751.1"/>
    <property type="molecule type" value="Genomic_DNA"/>
</dbReference>
<dbReference type="EMBL" id="KT265177">
    <property type="protein sequence ID" value="ALA50754.1"/>
    <property type="molecule type" value="Genomic_DNA"/>
</dbReference>
<dbReference type="EMBL" id="KT265178">
    <property type="protein sequence ID" value="ALA50757.1"/>
    <property type="molecule type" value="Genomic_DNA"/>
</dbReference>
<dbReference type="EMBL" id="KT265179">
    <property type="protein sequence ID" value="ALA50760.1"/>
    <property type="molecule type" value="Genomic_DNA"/>
</dbReference>
<dbReference type="EMBL" id="KT265180">
    <property type="protein sequence ID" value="ALA50763.1"/>
    <property type="molecule type" value="Genomic_DNA"/>
</dbReference>
<dbReference type="EMBL" id="KT265181">
    <property type="protein sequence ID" value="ALA50766.1"/>
    <property type="molecule type" value="Genomic_DNA"/>
</dbReference>
<dbReference type="EMBL" id="KT265182">
    <property type="protein sequence ID" value="ALA50769.1"/>
    <property type="molecule type" value="Genomic_DNA"/>
</dbReference>
<dbReference type="EMBL" id="KT265183">
    <property type="protein sequence ID" value="ALA50772.1"/>
    <property type="molecule type" value="Genomic_DNA"/>
</dbReference>
<dbReference type="EMBL" id="OW968058">
    <property type="protein sequence ID" value="CAH5611484.1"/>
    <property type="molecule type" value="Genomic_DNA"/>
</dbReference>
<dbReference type="EMBL" id="LN864819">
    <property type="protein sequence ID" value="CRN12897.1"/>
    <property type="molecule type" value="Genomic_DNA"/>
</dbReference>
<dbReference type="EMBL" id="WJVL01000061">
    <property type="protein sequence ID" value="MRJ99868.1"/>
    <property type="molecule type" value="Genomic_DNA"/>
</dbReference>
<dbReference type="EMBL" id="WJVZ01000052">
    <property type="protein sequence ID" value="MRK29563.1"/>
    <property type="molecule type" value="Genomic_DNA"/>
</dbReference>
<dbReference type="EMBL" id="UJTF01000046">
    <property type="protein sequence ID" value="SWV87943.1"/>
    <property type="molecule type" value="Genomic_DNA"/>
</dbReference>
<dbReference type="EMBL" id="UJRG01000046">
    <property type="protein sequence ID" value="SWT23625.1"/>
    <property type="molecule type" value="Genomic_DNA"/>
</dbReference>
<dbReference type="RefSeq" id="YP_006958782.1">
    <property type="nucleotide sequence ID" value="NC_019154.1"/>
</dbReference>
<dbReference type="RefSeq" id="YP_007878504.1">
    <property type="nucleotide sequence ID" value="NC_021078.1"/>
</dbReference>
<dbReference type="RefSeq" id="YP_008090831.1">
    <property type="nucleotide sequence ID" value="NC_021488.1"/>
</dbReference>
<dbReference type="RefSeq" id="YP_008110831.1">
    <property type="nucleotide sequence ID" value="NC_021502.1"/>
</dbReference>
<dbReference type="RefSeq" id="YP_008888785.1">
    <property type="nucleotide sequence ID" value="NC_023027.1"/>
</dbReference>
<dbReference type="PDB" id="3HBR">
    <property type="method" value="X-ray"/>
    <property type="resolution" value="1.90 A"/>
    <property type="chains" value="A/B/C/D=1-265"/>
</dbReference>
<dbReference type="PDB" id="4S2J">
    <property type="method" value="X-ray"/>
    <property type="resolution" value="2.54 A"/>
    <property type="chains" value="A/B/C/D=1-265"/>
</dbReference>
<dbReference type="PDB" id="4S2K">
    <property type="method" value="X-ray"/>
    <property type="resolution" value="2.10 A"/>
    <property type="chains" value="A/B/C/D=1-265"/>
</dbReference>
<dbReference type="PDB" id="4S2N">
    <property type="method" value="X-ray"/>
    <property type="resolution" value="2.00 A"/>
    <property type="chains" value="A/B/C/D=1-265"/>
</dbReference>
<dbReference type="PDB" id="4S2P">
    <property type="method" value="X-ray"/>
    <property type="resolution" value="1.70 A"/>
    <property type="chains" value="A/B=1-265"/>
</dbReference>
<dbReference type="PDB" id="4WMC">
    <property type="method" value="X-ray"/>
    <property type="resolution" value="2.30 A"/>
    <property type="chains" value="A/B/C/D/E/F/G/H=24-265"/>
</dbReference>
<dbReference type="PDB" id="5DTK">
    <property type="method" value="X-ray"/>
    <property type="resolution" value="1.60 A"/>
    <property type="chains" value="A/B/C/D=1-265"/>
</dbReference>
<dbReference type="PDB" id="5DTS">
    <property type="method" value="X-ray"/>
    <property type="resolution" value="1.94 A"/>
    <property type="chains" value="A/B/C/D=22-265"/>
</dbReference>
<dbReference type="PDB" id="5DTT">
    <property type="method" value="X-ray"/>
    <property type="resolution" value="2.10 A"/>
    <property type="chains" value="A/B/C/D=22-265"/>
</dbReference>
<dbReference type="PDB" id="5DVA">
    <property type="method" value="X-ray"/>
    <property type="resolution" value="2.50 A"/>
    <property type="chains" value="A/B/C/D=22-265"/>
</dbReference>
<dbReference type="PDB" id="5FAQ">
    <property type="method" value="X-ray"/>
    <property type="resolution" value="1.96 A"/>
    <property type="chains" value="A/B=25-265"/>
</dbReference>
<dbReference type="PDB" id="5FAS">
    <property type="method" value="X-ray"/>
    <property type="resolution" value="1.74 A"/>
    <property type="chains" value="A/B=24-265"/>
</dbReference>
<dbReference type="PDB" id="5FAT">
    <property type="method" value="X-ray"/>
    <property type="resolution" value="2.09 A"/>
    <property type="chains" value="A/B=23-265"/>
</dbReference>
<dbReference type="PDB" id="5HAP">
    <property type="method" value="X-ray"/>
    <property type="resolution" value="1.89 A"/>
    <property type="chains" value="A/B=25-265"/>
</dbReference>
<dbReference type="PDB" id="5HAQ">
    <property type="method" value="X-ray"/>
    <property type="resolution" value="2.14 A"/>
    <property type="chains" value="A/B=25-265"/>
</dbReference>
<dbReference type="PDB" id="5OFT">
    <property type="method" value="X-ray"/>
    <property type="resolution" value="3.20 A"/>
    <property type="chains" value="A/B=23-265"/>
</dbReference>
<dbReference type="PDB" id="5QA4">
    <property type="method" value="X-ray"/>
    <property type="resolution" value="1.95 A"/>
    <property type="chains" value="A/B/C/D=23-265"/>
</dbReference>
<dbReference type="PDB" id="5QA5">
    <property type="method" value="X-ray"/>
    <property type="resolution" value="1.95 A"/>
    <property type="chains" value="A/B/C/D=23-265"/>
</dbReference>
<dbReference type="PDB" id="5QA6">
    <property type="method" value="X-ray"/>
    <property type="resolution" value="1.95 A"/>
    <property type="chains" value="A/B/C/D=23-265"/>
</dbReference>
<dbReference type="PDB" id="5QA7">
    <property type="method" value="X-ray"/>
    <property type="resolution" value="1.82 A"/>
    <property type="chains" value="A/B/C/D=23-265"/>
</dbReference>
<dbReference type="PDB" id="5QA8">
    <property type="method" value="X-ray"/>
    <property type="resolution" value="2.50 A"/>
    <property type="chains" value="A/B/C/D=23-265"/>
</dbReference>
<dbReference type="PDB" id="5QA9">
    <property type="method" value="X-ray"/>
    <property type="resolution" value="1.90 A"/>
    <property type="chains" value="A/B/C/D=23-265"/>
</dbReference>
<dbReference type="PDB" id="5QAA">
    <property type="method" value="X-ray"/>
    <property type="resolution" value="1.95 A"/>
    <property type="chains" value="A/B/C/D=23-265"/>
</dbReference>
<dbReference type="PDB" id="5QAB">
    <property type="method" value="X-ray"/>
    <property type="resolution" value="2.15 A"/>
    <property type="chains" value="A/B/C/D=23-265"/>
</dbReference>
<dbReference type="PDB" id="5QAC">
    <property type="method" value="X-ray"/>
    <property type="resolution" value="2.00 A"/>
    <property type="chains" value="A/B/C/D=23-265"/>
</dbReference>
<dbReference type="PDB" id="5QAD">
    <property type="method" value="X-ray"/>
    <property type="resolution" value="1.75 A"/>
    <property type="chains" value="A/B/C/D=23-265"/>
</dbReference>
<dbReference type="PDB" id="5QAE">
    <property type="method" value="X-ray"/>
    <property type="resolution" value="2.10 A"/>
    <property type="chains" value="A/B/C/D=23-265"/>
</dbReference>
<dbReference type="PDB" id="5QAF">
    <property type="method" value="X-ray"/>
    <property type="resolution" value="2.15 A"/>
    <property type="chains" value="A/B/C/D=23-265"/>
</dbReference>
<dbReference type="PDB" id="5QAG">
    <property type="method" value="X-ray"/>
    <property type="resolution" value="2.30 A"/>
    <property type="chains" value="A/B/C/D=23-265"/>
</dbReference>
<dbReference type="PDB" id="5QAH">
    <property type="method" value="X-ray"/>
    <property type="resolution" value="1.95 A"/>
    <property type="chains" value="A/B/C/D=23-265"/>
</dbReference>
<dbReference type="PDB" id="5QAI">
    <property type="method" value="X-ray"/>
    <property type="resolution" value="1.90 A"/>
    <property type="chains" value="A/B/C/D=23-265"/>
</dbReference>
<dbReference type="PDB" id="5QAJ">
    <property type="method" value="X-ray"/>
    <property type="resolution" value="2.00 A"/>
    <property type="chains" value="A/B/C/D=23-265"/>
</dbReference>
<dbReference type="PDB" id="5QAK">
    <property type="method" value="X-ray"/>
    <property type="resolution" value="1.90 A"/>
    <property type="chains" value="A/B/C/D=23-265"/>
</dbReference>
<dbReference type="PDB" id="5QAL">
    <property type="method" value="X-ray"/>
    <property type="resolution" value="1.95 A"/>
    <property type="chains" value="A/B/C/D=23-265"/>
</dbReference>
<dbReference type="PDB" id="5QAM">
    <property type="method" value="X-ray"/>
    <property type="resolution" value="1.87 A"/>
    <property type="chains" value="A/B/C/D=23-265"/>
</dbReference>
<dbReference type="PDB" id="5QAN">
    <property type="method" value="X-ray"/>
    <property type="resolution" value="2.30 A"/>
    <property type="chains" value="A/B/C/D=23-265"/>
</dbReference>
<dbReference type="PDB" id="5QAO">
    <property type="method" value="X-ray"/>
    <property type="resolution" value="2.00 A"/>
    <property type="chains" value="A/B/C/D=23-265"/>
</dbReference>
<dbReference type="PDB" id="5QAP">
    <property type="method" value="X-ray"/>
    <property type="resolution" value="1.79 A"/>
    <property type="chains" value="A/B/C/D=23-265"/>
</dbReference>
<dbReference type="PDB" id="5QAQ">
    <property type="method" value="X-ray"/>
    <property type="resolution" value="2.40 A"/>
    <property type="chains" value="A/B/C/D=23-265"/>
</dbReference>
<dbReference type="PDB" id="5QAR">
    <property type="method" value="X-ray"/>
    <property type="resolution" value="2.10 A"/>
    <property type="chains" value="A/B/C/D=23-265"/>
</dbReference>
<dbReference type="PDB" id="5QAS">
    <property type="method" value="X-ray"/>
    <property type="resolution" value="1.90 A"/>
    <property type="chains" value="A/B/C/D=23-265"/>
</dbReference>
<dbReference type="PDB" id="5QAT">
    <property type="method" value="X-ray"/>
    <property type="resolution" value="1.90 A"/>
    <property type="chains" value="A/B/C/D=23-265"/>
</dbReference>
<dbReference type="PDB" id="5QAU">
    <property type="method" value="X-ray"/>
    <property type="resolution" value="1.75 A"/>
    <property type="chains" value="A/B/C/D=23-265"/>
</dbReference>
<dbReference type="PDB" id="5QAV">
    <property type="method" value="X-ray"/>
    <property type="resolution" value="1.72 A"/>
    <property type="chains" value="A/B/C/D=23-265"/>
</dbReference>
<dbReference type="PDB" id="5QAW">
    <property type="method" value="X-ray"/>
    <property type="resolution" value="2.20 A"/>
    <property type="chains" value="A/B/C/D=23-265"/>
</dbReference>
<dbReference type="PDB" id="5QAX">
    <property type="method" value="X-ray"/>
    <property type="resolution" value="2.31 A"/>
    <property type="chains" value="A/B/C/D=23-265"/>
</dbReference>
<dbReference type="PDB" id="5QAY">
    <property type="method" value="X-ray"/>
    <property type="resolution" value="1.70 A"/>
    <property type="chains" value="A/B/C/D=23-265"/>
</dbReference>
<dbReference type="PDB" id="5QAZ">
    <property type="method" value="X-ray"/>
    <property type="resolution" value="2.20 A"/>
    <property type="chains" value="A/B/C/D=23-265"/>
</dbReference>
<dbReference type="PDB" id="5QB0">
    <property type="method" value="X-ray"/>
    <property type="resolution" value="1.95 A"/>
    <property type="chains" value="A/B/C/D=23-265"/>
</dbReference>
<dbReference type="PDB" id="5QB1">
    <property type="method" value="X-ray"/>
    <property type="resolution" value="1.80 A"/>
    <property type="chains" value="A/B/C/D=23-265"/>
</dbReference>
<dbReference type="PDB" id="5QB2">
    <property type="method" value="X-ray"/>
    <property type="resolution" value="1.75 A"/>
    <property type="chains" value="A/B/C/D=23-265"/>
</dbReference>
<dbReference type="PDB" id="5QB3">
    <property type="method" value="X-ray"/>
    <property type="resolution" value="2.00 A"/>
    <property type="chains" value="A/B/C/D=23-265"/>
</dbReference>
<dbReference type="PDB" id="5QB4">
    <property type="method" value="X-ray"/>
    <property type="resolution" value="1.95 A"/>
    <property type="chains" value="A/B/C/D=23-265"/>
</dbReference>
<dbReference type="PDB" id="6GOA">
    <property type="method" value="X-ray"/>
    <property type="resolution" value="2.55 A"/>
    <property type="chains" value="A/B/C/D/E/F/G/H=23-265"/>
</dbReference>
<dbReference type="PDB" id="6HOO">
    <property type="method" value="X-ray"/>
    <property type="resolution" value="2.38 A"/>
    <property type="chains" value="A/B=21-265"/>
</dbReference>
<dbReference type="PDB" id="6I5D">
    <property type="method" value="X-ray"/>
    <property type="resolution" value="1.75 A"/>
    <property type="chains" value="A/B=21-265"/>
</dbReference>
<dbReference type="PDB" id="6P96">
    <property type="method" value="X-ray"/>
    <property type="resolution" value="1.60 A"/>
    <property type="chains" value="A/B=1-265"/>
</dbReference>
<dbReference type="PDB" id="6P97">
    <property type="method" value="X-ray"/>
    <property type="resolution" value="1.80 A"/>
    <property type="chains" value="A/B=1-265"/>
</dbReference>
<dbReference type="PDB" id="6P98">
    <property type="method" value="X-ray"/>
    <property type="resolution" value="1.75 A"/>
    <property type="chains" value="A/B=1-265"/>
</dbReference>
<dbReference type="PDB" id="6P99">
    <property type="method" value="X-ray"/>
    <property type="resolution" value="2.25 A"/>
    <property type="chains" value="A/B=1-265"/>
</dbReference>
<dbReference type="PDB" id="6P9C">
    <property type="method" value="X-ray"/>
    <property type="resolution" value="1.90 A"/>
    <property type="chains" value="A/B=1-265"/>
</dbReference>
<dbReference type="PDB" id="6PK0">
    <property type="method" value="X-ray"/>
    <property type="resolution" value="1.75 A"/>
    <property type="chains" value="A/B/C/D=25-265"/>
</dbReference>
<dbReference type="PDB" id="6PQI">
    <property type="method" value="X-ray"/>
    <property type="resolution" value="2.05 A"/>
    <property type="chains" value="A/B/C/D=25-265"/>
</dbReference>
<dbReference type="PDB" id="6PSG">
    <property type="method" value="X-ray"/>
    <property type="resolution" value="2.13 A"/>
    <property type="chains" value="A/B/C/D=25-265"/>
</dbReference>
<dbReference type="PDB" id="6PT1">
    <property type="method" value="X-ray"/>
    <property type="resolution" value="2.00 A"/>
    <property type="chains" value="A/B/C/D=25-265"/>
</dbReference>
<dbReference type="PDB" id="6PT5">
    <property type="method" value="X-ray"/>
    <property type="resolution" value="2.30 A"/>
    <property type="chains" value="A/B/C/D=25-265"/>
</dbReference>
<dbReference type="PDB" id="6PTU">
    <property type="method" value="X-ray"/>
    <property type="resolution" value="2.00 A"/>
    <property type="chains" value="A/B/C/D=25-265"/>
</dbReference>
<dbReference type="PDB" id="6PXX">
    <property type="method" value="X-ray"/>
    <property type="resolution" value="1.50 A"/>
    <property type="chains" value="A/B=1-265"/>
</dbReference>
<dbReference type="PDB" id="6Q5B">
    <property type="method" value="X-ray"/>
    <property type="resolution" value="2.22 A"/>
    <property type="chains" value="A/B/C/D=1-265"/>
</dbReference>
<dbReference type="PDB" id="6Q5F">
    <property type="method" value="X-ray"/>
    <property type="resolution" value="2.50 A"/>
    <property type="chains" value="A/B/C/D=1-265"/>
</dbReference>
<dbReference type="PDB" id="6RJ7">
    <property type="method" value="X-ray"/>
    <property type="resolution" value="1.73 A"/>
    <property type="chains" value="A/B=23-265"/>
</dbReference>
<dbReference type="PDB" id="6UVK">
    <property type="method" value="X-ray"/>
    <property type="resolution" value="2.20 A"/>
    <property type="chains" value="A/B/C/D=25-265"/>
</dbReference>
<dbReference type="PDB" id="6V1O">
    <property type="method" value="X-ray"/>
    <property type="resolution" value="1.80 A"/>
    <property type="chains" value="A/B/C/D=25-265"/>
</dbReference>
<dbReference type="PDB" id="6XQR">
    <property type="method" value="X-ray"/>
    <property type="resolution" value="2.20 A"/>
    <property type="chains" value="A/B=25-265"/>
</dbReference>
<dbReference type="PDB" id="6ZRJ">
    <property type="method" value="X-ray"/>
    <property type="resolution" value="1.94 A"/>
    <property type="chains" value="A/B/C/D/E/F/G/H=1-265"/>
</dbReference>
<dbReference type="PDB" id="6ZRP">
    <property type="method" value="X-ray"/>
    <property type="resolution" value="1.74 A"/>
    <property type="chains" value="A/B/C/D=1-265"/>
</dbReference>
<dbReference type="PDB" id="6ZXI">
    <property type="method" value="X-ray"/>
    <property type="resolution" value="1.85 A"/>
    <property type="chains" value="A/B=1-265"/>
</dbReference>
<dbReference type="PDB" id="7ASS">
    <property type="method" value="X-ray"/>
    <property type="resolution" value="1.91 A"/>
    <property type="chains" value="A/B/C/D=1-265"/>
</dbReference>
<dbReference type="PDB" id="7AUX">
    <property type="method" value="X-ray"/>
    <property type="resolution" value="2.05 A"/>
    <property type="chains" value="A/B=24-265"/>
</dbReference>
<dbReference type="PDB" id="7AW5">
    <property type="method" value="X-ray"/>
    <property type="resolution" value="1.65 A"/>
    <property type="chains" value="A/B=24-265"/>
</dbReference>
<dbReference type="PDB" id="7DML">
    <property type="method" value="X-ray"/>
    <property type="resolution" value="1.94 A"/>
    <property type="chains" value="A/B/C/D=1-265"/>
</dbReference>
<dbReference type="PDB" id="7JHQ">
    <property type="method" value="X-ray"/>
    <property type="resolution" value="2.00 A"/>
    <property type="chains" value="A/B/C/D=25-265"/>
</dbReference>
<dbReference type="PDB" id="7K5V">
    <property type="method" value="X-ray"/>
    <property type="resolution" value="2.80 A"/>
    <property type="chains" value="A/B=25-265"/>
</dbReference>
<dbReference type="PDB" id="7KH9">
    <property type="method" value="X-ray"/>
    <property type="resolution" value="2.29 A"/>
    <property type="chains" value="A/B=25-265"/>
</dbReference>
<dbReference type="PDB" id="7KHQ">
    <property type="method" value="X-ray"/>
    <property type="resolution" value="2.00 A"/>
    <property type="chains" value="A/B=25-265"/>
</dbReference>
<dbReference type="PDB" id="7L8O">
    <property type="method" value="X-ray"/>
    <property type="resolution" value="2.70 A"/>
    <property type="chains" value="A/B/C/D=25-265"/>
</dbReference>
<dbReference type="PDB" id="7LXG">
    <property type="method" value="X-ray"/>
    <property type="resolution" value="2.20 A"/>
    <property type="chains" value="A/B=1-265"/>
</dbReference>
<dbReference type="PDB" id="7O5N">
    <property type="method" value="X-ray"/>
    <property type="resolution" value="1.60 A"/>
    <property type="chains" value="AAA/BBB/CCC/DDD=23-265"/>
</dbReference>
<dbReference type="PDB" id="7O5Q">
    <property type="method" value="X-ray"/>
    <property type="resolution" value="1.85 A"/>
    <property type="chains" value="AAA/BBB/CCC/DDD=23-265"/>
</dbReference>
<dbReference type="PDB" id="7O9N">
    <property type="method" value="X-ray"/>
    <property type="resolution" value="1.97 A"/>
    <property type="chains" value="AAA/BBB/CCC/DDD=23-265"/>
</dbReference>
<dbReference type="PDB" id="7PEH">
    <property type="method" value="X-ray"/>
    <property type="resolution" value="1.92 A"/>
    <property type="chains" value="AAA/BBB/CCC/DDD=23-265"/>
</dbReference>
<dbReference type="PDB" id="7PEP">
    <property type="method" value="X-ray"/>
    <property type="resolution" value="1.70 A"/>
    <property type="chains" value="AAA/BBB/CCC/DDD=23-265"/>
</dbReference>
<dbReference type="PDB" id="7PGO">
    <property type="method" value="X-ray"/>
    <property type="resolution" value="1.85 A"/>
    <property type="chains" value="AAA/BBB/CCC/DDD=23-265"/>
</dbReference>
<dbReference type="PDB" id="7PSF">
    <property type="method" value="X-ray"/>
    <property type="resolution" value="2.10 A"/>
    <property type="chains" value="AAA/BBB/CCC/DDD=23-265"/>
</dbReference>
<dbReference type="PDB" id="7R6Z">
    <property type="method" value="X-ray"/>
    <property type="resolution" value="2.10 A"/>
    <property type="chains" value="A/B=25-265"/>
</dbReference>
<dbReference type="PDB" id="8FAJ">
    <property type="method" value="X-ray"/>
    <property type="resolution" value="1.75 A"/>
    <property type="chains" value="A/B=1-265"/>
</dbReference>
<dbReference type="PDB" id="8PEA">
    <property type="method" value="X-ray"/>
    <property type="resolution" value="1.97 A"/>
    <property type="chains" value="A/B=1-265"/>
</dbReference>
<dbReference type="PDB" id="8PEB">
    <property type="method" value="X-ray"/>
    <property type="resolution" value="1.17 A"/>
    <property type="chains" value="A=24-265"/>
</dbReference>
<dbReference type="PDB" id="8PEC">
    <property type="method" value="X-ray"/>
    <property type="resolution" value="2.66 A"/>
    <property type="chains" value="A/B/C/D=24-265"/>
</dbReference>
<dbReference type="PDB" id="8QNZ">
    <property type="method" value="X-ray"/>
    <property type="resolution" value="1.53 A"/>
    <property type="chains" value="AAA/BBB/CCC/DDD=23-265"/>
</dbReference>
<dbReference type="PDB" id="8SQF">
    <property type="method" value="X-ray"/>
    <property type="resolution" value="2.30 A"/>
    <property type="chains" value="A/B=1-265"/>
</dbReference>
<dbReference type="PDB" id="8SQG">
    <property type="method" value="X-ray"/>
    <property type="resolution" value="2.03 A"/>
    <property type="chains" value="A/B=1-265"/>
</dbReference>
<dbReference type="PDBsum" id="3HBR"/>
<dbReference type="PDBsum" id="4S2J"/>
<dbReference type="PDBsum" id="4S2K"/>
<dbReference type="PDBsum" id="4S2N"/>
<dbReference type="PDBsum" id="4S2P"/>
<dbReference type="PDBsum" id="4WMC"/>
<dbReference type="PDBsum" id="5DTK"/>
<dbReference type="PDBsum" id="5DTS"/>
<dbReference type="PDBsum" id="5DTT"/>
<dbReference type="PDBsum" id="5DVA"/>
<dbReference type="PDBsum" id="5FAQ"/>
<dbReference type="PDBsum" id="5FAS"/>
<dbReference type="PDBsum" id="5FAT"/>
<dbReference type="PDBsum" id="5HAP"/>
<dbReference type="PDBsum" id="5HAQ"/>
<dbReference type="PDBsum" id="5OFT"/>
<dbReference type="PDBsum" id="5QA4"/>
<dbReference type="PDBsum" id="5QA5"/>
<dbReference type="PDBsum" id="5QA6"/>
<dbReference type="PDBsum" id="5QA7"/>
<dbReference type="PDBsum" id="5QA8"/>
<dbReference type="PDBsum" id="5QA9"/>
<dbReference type="PDBsum" id="5QAA"/>
<dbReference type="PDBsum" id="5QAB"/>
<dbReference type="PDBsum" id="5QAC"/>
<dbReference type="PDBsum" id="5QAD"/>
<dbReference type="PDBsum" id="5QAE"/>
<dbReference type="PDBsum" id="5QAF"/>
<dbReference type="PDBsum" id="5QAG"/>
<dbReference type="PDBsum" id="5QAH"/>
<dbReference type="PDBsum" id="5QAI"/>
<dbReference type="PDBsum" id="5QAJ"/>
<dbReference type="PDBsum" id="5QAK"/>
<dbReference type="PDBsum" id="5QAL"/>
<dbReference type="PDBsum" id="5QAM"/>
<dbReference type="PDBsum" id="5QAN"/>
<dbReference type="PDBsum" id="5QAO"/>
<dbReference type="PDBsum" id="5QAP"/>
<dbReference type="PDBsum" id="5QAQ"/>
<dbReference type="PDBsum" id="5QAR"/>
<dbReference type="PDBsum" id="5QAS"/>
<dbReference type="PDBsum" id="5QAT"/>
<dbReference type="PDBsum" id="5QAU"/>
<dbReference type="PDBsum" id="5QAV"/>
<dbReference type="PDBsum" id="5QAW"/>
<dbReference type="PDBsum" id="5QAX"/>
<dbReference type="PDBsum" id="5QAY"/>
<dbReference type="PDBsum" id="5QAZ"/>
<dbReference type="PDBsum" id="5QB0"/>
<dbReference type="PDBsum" id="5QB1"/>
<dbReference type="PDBsum" id="5QB2"/>
<dbReference type="PDBsum" id="5QB3"/>
<dbReference type="PDBsum" id="5QB4"/>
<dbReference type="PDBsum" id="6GOA"/>
<dbReference type="PDBsum" id="6HOO"/>
<dbReference type="PDBsum" id="6I5D"/>
<dbReference type="PDBsum" id="6P96"/>
<dbReference type="PDBsum" id="6P97"/>
<dbReference type="PDBsum" id="6P98"/>
<dbReference type="PDBsum" id="6P99"/>
<dbReference type="PDBsum" id="6P9C"/>
<dbReference type="PDBsum" id="6PK0"/>
<dbReference type="PDBsum" id="6PQI"/>
<dbReference type="PDBsum" id="6PSG"/>
<dbReference type="PDBsum" id="6PT1"/>
<dbReference type="PDBsum" id="6PT5"/>
<dbReference type="PDBsum" id="6PTU"/>
<dbReference type="PDBsum" id="6PXX"/>
<dbReference type="PDBsum" id="6Q5B"/>
<dbReference type="PDBsum" id="6Q5F"/>
<dbReference type="PDBsum" id="6RJ7"/>
<dbReference type="PDBsum" id="6UVK"/>
<dbReference type="PDBsum" id="6V1O"/>
<dbReference type="PDBsum" id="6XQR"/>
<dbReference type="PDBsum" id="6ZRJ"/>
<dbReference type="PDBsum" id="6ZRP"/>
<dbReference type="PDBsum" id="6ZXI"/>
<dbReference type="PDBsum" id="7ASS"/>
<dbReference type="PDBsum" id="7AUX"/>
<dbReference type="PDBsum" id="7AW5"/>
<dbReference type="PDBsum" id="7DML"/>
<dbReference type="PDBsum" id="7JHQ"/>
<dbReference type="PDBsum" id="7K5V"/>
<dbReference type="PDBsum" id="7KH9"/>
<dbReference type="PDBsum" id="7KHQ"/>
<dbReference type="PDBsum" id="7L8O"/>
<dbReference type="PDBsum" id="7LXG"/>
<dbReference type="PDBsum" id="7O5N"/>
<dbReference type="PDBsum" id="7O5Q"/>
<dbReference type="PDBsum" id="7O9N"/>
<dbReference type="PDBsum" id="7PEH"/>
<dbReference type="PDBsum" id="7PEP"/>
<dbReference type="PDBsum" id="7PGO"/>
<dbReference type="PDBsum" id="7PSF"/>
<dbReference type="PDBsum" id="7R6Z"/>
<dbReference type="PDBsum" id="8FAJ"/>
<dbReference type="PDBsum" id="8PEA"/>
<dbReference type="PDBsum" id="8PEB"/>
<dbReference type="PDBsum" id="8PEC"/>
<dbReference type="PDBsum" id="8QNZ"/>
<dbReference type="PDBsum" id="8SQF"/>
<dbReference type="PDBsum" id="8SQG"/>
<dbReference type="SASBDB" id="Q6XEC0"/>
<dbReference type="SMR" id="Q6XEC0"/>
<dbReference type="BindingDB" id="Q6XEC0"/>
<dbReference type="ChEMBL" id="CHEMBL1287604"/>
<dbReference type="CARD" id="ARO:3001782">
    <property type="molecule name" value="OXA-48"/>
    <property type="mechanism identifier" value="ARO:0001004"/>
    <property type="mechanism name" value="antibiotic inactivation"/>
</dbReference>
<dbReference type="KEGG" id="ag:AAP70012"/>
<dbReference type="PATRIC" id="fig|573.1347.peg.5526"/>
<dbReference type="BRENDA" id="3.5.2.6">
    <property type="organism ID" value="2814"/>
</dbReference>
<dbReference type="Proteomes" id="UP000258798">
    <property type="component" value="Unassembled WGS sequence"/>
</dbReference>
<dbReference type="Proteomes" id="UP000441029">
    <property type="component" value="Unassembled WGS sequence"/>
</dbReference>
<dbReference type="GO" id="GO:0005886">
    <property type="term" value="C:plasma membrane"/>
    <property type="evidence" value="ECO:0007669"/>
    <property type="project" value="TreeGrafter"/>
</dbReference>
<dbReference type="GO" id="GO:0008800">
    <property type="term" value="F:beta-lactamase activity"/>
    <property type="evidence" value="ECO:0007669"/>
    <property type="project" value="UniProtKB-EC"/>
</dbReference>
<dbReference type="GO" id="GO:0008658">
    <property type="term" value="F:penicillin binding"/>
    <property type="evidence" value="ECO:0007669"/>
    <property type="project" value="InterPro"/>
</dbReference>
<dbReference type="GO" id="GO:0017001">
    <property type="term" value="P:antibiotic catabolic process"/>
    <property type="evidence" value="ECO:0007669"/>
    <property type="project" value="InterPro"/>
</dbReference>
<dbReference type="GO" id="GO:0071555">
    <property type="term" value="P:cell wall organization"/>
    <property type="evidence" value="ECO:0007669"/>
    <property type="project" value="TreeGrafter"/>
</dbReference>
<dbReference type="GO" id="GO:0046677">
    <property type="term" value="P:response to antibiotic"/>
    <property type="evidence" value="ECO:0007669"/>
    <property type="project" value="UniProtKB-KW"/>
</dbReference>
<dbReference type="FunFam" id="3.40.710.10:FF:000019">
    <property type="entry name" value="Beta-lactamase"/>
    <property type="match status" value="1"/>
</dbReference>
<dbReference type="Gene3D" id="3.40.710.10">
    <property type="entry name" value="DD-peptidase/beta-lactamase superfamily"/>
    <property type="match status" value="1"/>
</dbReference>
<dbReference type="InterPro" id="IPR050515">
    <property type="entry name" value="Bact_Transpept/Beta-Lactamase"/>
</dbReference>
<dbReference type="InterPro" id="IPR012338">
    <property type="entry name" value="Beta-lactam/transpept-like"/>
</dbReference>
<dbReference type="InterPro" id="IPR002137">
    <property type="entry name" value="Beta-lactam_class-D_AS"/>
</dbReference>
<dbReference type="InterPro" id="IPR001460">
    <property type="entry name" value="PCN-bd_Tpept"/>
</dbReference>
<dbReference type="NCBIfam" id="NF012161">
    <property type="entry name" value="bla_class_D_main"/>
    <property type="match status" value="1"/>
</dbReference>
<dbReference type="NCBIfam" id="NF000387">
    <property type="entry name" value="blaOXA-48_like"/>
    <property type="match status" value="1"/>
</dbReference>
<dbReference type="PANTHER" id="PTHR30627:SF6">
    <property type="entry name" value="BETA-LACTAMASE YBXI-RELATED"/>
    <property type="match status" value="1"/>
</dbReference>
<dbReference type="PANTHER" id="PTHR30627">
    <property type="entry name" value="PEPTIDOGLYCAN D,D-TRANSPEPTIDASE"/>
    <property type="match status" value="1"/>
</dbReference>
<dbReference type="Pfam" id="PF00905">
    <property type="entry name" value="Transpeptidase"/>
    <property type="match status" value="1"/>
</dbReference>
<dbReference type="SUPFAM" id="SSF56601">
    <property type="entry name" value="beta-lactamase/transpeptidase-like"/>
    <property type="match status" value="1"/>
</dbReference>
<dbReference type="PROSITE" id="PS00337">
    <property type="entry name" value="BETA_LACTAMASE_D"/>
    <property type="match status" value="1"/>
</dbReference>